<proteinExistence type="inferred from homology"/>
<evidence type="ECO:0000255" key="1">
    <source>
        <dbReference type="HAMAP-Rule" id="MF_00076"/>
    </source>
</evidence>
<gene>
    <name evidence="1" type="primary">hisB</name>
    <name type="ordered locus">LS215_1645</name>
</gene>
<feature type="chain" id="PRO_1000202520" description="Imidazoleglycerol-phosphate dehydratase">
    <location>
        <begin position="1"/>
        <end position="193"/>
    </location>
</feature>
<name>HIS7_SACI2</name>
<sequence>MARNANITRETKETKIEVFLDIDRKGEIKVSTPVPFFNHMLITLLTYMNSTATVSATDKLPYDDHHIIEDVAITLGLAIKEALGDKRGIKRFSHQIIPMDEALVLVSLDISNRGMAFVSLNLKRSEIGGLATENIPHFFQSFAYNSGVTLHISQLSGYNTHHIIEASFKALGLALYEATRIVDNEIRSTKGVI</sequence>
<organism>
    <name type="scientific">Saccharolobus islandicus (strain L.S.2.15 / Lassen #1)</name>
    <name type="common">Sulfolobus islandicus</name>
    <dbReference type="NCBI Taxonomy" id="429572"/>
    <lineage>
        <taxon>Archaea</taxon>
        <taxon>Thermoproteota</taxon>
        <taxon>Thermoprotei</taxon>
        <taxon>Sulfolobales</taxon>
        <taxon>Sulfolobaceae</taxon>
        <taxon>Saccharolobus</taxon>
    </lineage>
</organism>
<accession>C3MQI6</accession>
<reference key="1">
    <citation type="journal article" date="2009" name="Proc. Natl. Acad. Sci. U.S.A.">
        <title>Biogeography of the Sulfolobus islandicus pan-genome.</title>
        <authorList>
            <person name="Reno M.L."/>
            <person name="Held N.L."/>
            <person name="Fields C.J."/>
            <person name="Burke P.V."/>
            <person name="Whitaker R.J."/>
        </authorList>
    </citation>
    <scope>NUCLEOTIDE SEQUENCE [LARGE SCALE GENOMIC DNA]</scope>
    <source>
        <strain>L.S.2.15 / Lassen #1</strain>
    </source>
</reference>
<protein>
    <recommendedName>
        <fullName evidence="1">Imidazoleglycerol-phosphate dehydratase</fullName>
        <shortName evidence="1">IGPD</shortName>
        <ecNumber evidence="1">4.2.1.19</ecNumber>
    </recommendedName>
</protein>
<comment type="catalytic activity">
    <reaction evidence="1">
        <text>D-erythro-1-(imidazol-4-yl)glycerol 3-phosphate = 3-(imidazol-4-yl)-2-oxopropyl phosphate + H2O</text>
        <dbReference type="Rhea" id="RHEA:11040"/>
        <dbReference type="ChEBI" id="CHEBI:15377"/>
        <dbReference type="ChEBI" id="CHEBI:57766"/>
        <dbReference type="ChEBI" id="CHEBI:58278"/>
        <dbReference type="EC" id="4.2.1.19"/>
    </reaction>
</comment>
<comment type="pathway">
    <text evidence="1">Amino-acid biosynthesis; L-histidine biosynthesis; L-histidine from 5-phospho-alpha-D-ribose 1-diphosphate: step 6/9.</text>
</comment>
<comment type="subcellular location">
    <subcellularLocation>
        <location evidence="1">Cytoplasm</location>
    </subcellularLocation>
</comment>
<comment type="similarity">
    <text evidence="1">Belongs to the imidazoleglycerol-phosphate dehydratase family.</text>
</comment>
<keyword id="KW-0028">Amino-acid biosynthesis</keyword>
<keyword id="KW-0963">Cytoplasm</keyword>
<keyword id="KW-0368">Histidine biosynthesis</keyword>
<keyword id="KW-0456">Lyase</keyword>
<dbReference type="EC" id="4.2.1.19" evidence="1"/>
<dbReference type="EMBL" id="CP001399">
    <property type="protein sequence ID" value="ACP35649.1"/>
    <property type="molecule type" value="Genomic_DNA"/>
</dbReference>
<dbReference type="RefSeq" id="WP_012713809.1">
    <property type="nucleotide sequence ID" value="NC_012589.1"/>
</dbReference>
<dbReference type="SMR" id="C3MQI6"/>
<dbReference type="GeneID" id="7799279"/>
<dbReference type="KEGG" id="sis:LS215_1645"/>
<dbReference type="HOGENOM" id="CLU_044308_3_0_2"/>
<dbReference type="OrthoDB" id="103579at2157"/>
<dbReference type="UniPathway" id="UPA00031">
    <property type="reaction ID" value="UER00011"/>
</dbReference>
<dbReference type="Proteomes" id="UP000001747">
    <property type="component" value="Chromosome"/>
</dbReference>
<dbReference type="GO" id="GO:0005737">
    <property type="term" value="C:cytoplasm"/>
    <property type="evidence" value="ECO:0007669"/>
    <property type="project" value="UniProtKB-SubCell"/>
</dbReference>
<dbReference type="GO" id="GO:0004424">
    <property type="term" value="F:imidazoleglycerol-phosphate dehydratase activity"/>
    <property type="evidence" value="ECO:0007669"/>
    <property type="project" value="UniProtKB-UniRule"/>
</dbReference>
<dbReference type="GO" id="GO:0000105">
    <property type="term" value="P:L-histidine biosynthetic process"/>
    <property type="evidence" value="ECO:0007669"/>
    <property type="project" value="UniProtKB-UniRule"/>
</dbReference>
<dbReference type="CDD" id="cd07914">
    <property type="entry name" value="IGPD"/>
    <property type="match status" value="1"/>
</dbReference>
<dbReference type="FunFam" id="3.30.230.40:FF:000001">
    <property type="entry name" value="Imidazoleglycerol-phosphate dehydratase HisB"/>
    <property type="match status" value="1"/>
</dbReference>
<dbReference type="FunFam" id="3.30.230.40:FF:000003">
    <property type="entry name" value="Imidazoleglycerol-phosphate dehydratase HisB"/>
    <property type="match status" value="1"/>
</dbReference>
<dbReference type="Gene3D" id="3.30.230.40">
    <property type="entry name" value="Imidazole glycerol phosphate dehydratase, domain 1"/>
    <property type="match status" value="2"/>
</dbReference>
<dbReference type="HAMAP" id="MF_00076">
    <property type="entry name" value="HisB"/>
    <property type="match status" value="1"/>
</dbReference>
<dbReference type="InterPro" id="IPR038494">
    <property type="entry name" value="IGPD_sf"/>
</dbReference>
<dbReference type="InterPro" id="IPR000807">
    <property type="entry name" value="ImidazoleglycerolP_deHydtase"/>
</dbReference>
<dbReference type="InterPro" id="IPR020565">
    <property type="entry name" value="ImidazoleglycerP_deHydtase_CS"/>
</dbReference>
<dbReference type="InterPro" id="IPR020568">
    <property type="entry name" value="Ribosomal_Su5_D2-typ_SF"/>
</dbReference>
<dbReference type="NCBIfam" id="NF002114">
    <property type="entry name" value="PRK00951.2-4"/>
    <property type="match status" value="1"/>
</dbReference>
<dbReference type="NCBIfam" id="NF010121">
    <property type="entry name" value="PRK13598.1"/>
    <property type="match status" value="1"/>
</dbReference>
<dbReference type="PANTHER" id="PTHR23133:SF2">
    <property type="entry name" value="IMIDAZOLEGLYCEROL-PHOSPHATE DEHYDRATASE"/>
    <property type="match status" value="1"/>
</dbReference>
<dbReference type="PANTHER" id="PTHR23133">
    <property type="entry name" value="IMIDAZOLEGLYCEROL-PHOSPHATE DEHYDRATASE HIS7"/>
    <property type="match status" value="1"/>
</dbReference>
<dbReference type="Pfam" id="PF00475">
    <property type="entry name" value="IGPD"/>
    <property type="match status" value="1"/>
</dbReference>
<dbReference type="SUPFAM" id="SSF54211">
    <property type="entry name" value="Ribosomal protein S5 domain 2-like"/>
    <property type="match status" value="2"/>
</dbReference>
<dbReference type="PROSITE" id="PS00954">
    <property type="entry name" value="IGP_DEHYDRATASE_1"/>
    <property type="match status" value="1"/>
</dbReference>
<dbReference type="PROSITE" id="PS00955">
    <property type="entry name" value="IGP_DEHYDRATASE_2"/>
    <property type="match status" value="1"/>
</dbReference>